<name>ARP19_MOUSE</name>
<gene>
    <name type="primary">Arpp19</name>
</gene>
<accession>P56212</accession>
<accession>Q543L2</accession>
<comment type="function">
    <text evidence="2 4">Protein phosphatase inhibitor that specifically inhibits protein phosphatase 2A (PP2A) during mitosis (By similarity). Inhibition of PP2A is enhanced when ARPP19 is phosphorylated (By similarity). When phosphorylated at Ser-62 during mitosis, specifically interacts with PPP2R2D (PR55-delta) and inhibits its activity, leading to inactivation of PP2A, an essential condition to keep cyclin-B1-CDK1 activity high during M phase (By similarity). May indirectly enhance GAP-43 expression by binding to the NGF-regulatory region of its mRNA (By similarity).</text>
</comment>
<comment type="subunit">
    <text evidence="2">Interacts (when phosphorylated at Ser-62) with PPP2R2D. Interacts with SNCA (By similarity). Interacts with PPP2R2A; the interaction is direct and this interaction inhibits PP2A activity (By similarity).</text>
</comment>
<comment type="subcellular location">
    <subcellularLocation>
        <location evidence="1">Cytoplasm</location>
    </subcellularLocation>
</comment>
<comment type="alternative products">
    <event type="alternative splicing"/>
    <isoform>
        <id>P56212-1</id>
        <name>ARPP-19</name>
        <sequence type="displayed"/>
    </isoform>
    <isoform>
        <id>P56212-2</id>
        <name>ARPP-16</name>
        <sequence type="described" ref="VSP_018556"/>
    </isoform>
</comment>
<comment type="developmental stage">
    <text evidence="8">Isoform ARPP-19 is highly expressed in the embryo and its levels decrease progressively as development proceeds. In contrast, isoform ARPP-16 appears in the brain at the end of the first postnatal week and increases to reach a plateau.</text>
</comment>
<comment type="PTM">
    <text evidence="1 6 7">Phosphorylation at Ser-62 by MASTL/GWL during mitosis is essential for interaction with PPP2R2D (PR55-delta) and subsequent inactivation of PP2A (By similarity). Phosphorylated by PKA.</text>
</comment>
<comment type="similarity">
    <text evidence="10">Belongs to the endosulfine family.</text>
</comment>
<reference key="1">
    <citation type="submission" date="1999-01" db="EMBL/GenBank/DDBJ databases">
        <title>Differential expression of ARPP-16 and ARPP-19, two highly related phosphoproteins, one of which is specifically associated with dopamine-innervated brain regions.</title>
        <authorList>
            <person name="Girault J.-A."/>
            <person name="Horiuchi A."/>
            <person name="Gustafson E."/>
            <person name="Rosen N."/>
            <person name="Greengard P."/>
        </authorList>
    </citation>
    <scope>NUCLEOTIDE SEQUENCE [MRNA] (ISOFORMS ARPP-16 AND ARPP-19)</scope>
    <scope>DEVELOPMENTAL STAGE</scope>
    <source>
        <tissue>Brain</tissue>
    </source>
</reference>
<reference key="2">
    <citation type="journal article" date="2005" name="Science">
        <title>The transcriptional landscape of the mammalian genome.</title>
        <authorList>
            <person name="Carninci P."/>
            <person name="Kasukawa T."/>
            <person name="Katayama S."/>
            <person name="Gough J."/>
            <person name="Frith M.C."/>
            <person name="Maeda N."/>
            <person name="Oyama R."/>
            <person name="Ravasi T."/>
            <person name="Lenhard B."/>
            <person name="Wells C."/>
            <person name="Kodzius R."/>
            <person name="Shimokawa K."/>
            <person name="Bajic V.B."/>
            <person name="Brenner S.E."/>
            <person name="Batalov S."/>
            <person name="Forrest A.R."/>
            <person name="Zavolan M."/>
            <person name="Davis M.J."/>
            <person name="Wilming L.G."/>
            <person name="Aidinis V."/>
            <person name="Allen J.E."/>
            <person name="Ambesi-Impiombato A."/>
            <person name="Apweiler R."/>
            <person name="Aturaliya R.N."/>
            <person name="Bailey T.L."/>
            <person name="Bansal M."/>
            <person name="Baxter L."/>
            <person name="Beisel K.W."/>
            <person name="Bersano T."/>
            <person name="Bono H."/>
            <person name="Chalk A.M."/>
            <person name="Chiu K.P."/>
            <person name="Choudhary V."/>
            <person name="Christoffels A."/>
            <person name="Clutterbuck D.R."/>
            <person name="Crowe M.L."/>
            <person name="Dalla E."/>
            <person name="Dalrymple B.P."/>
            <person name="de Bono B."/>
            <person name="Della Gatta G."/>
            <person name="di Bernardo D."/>
            <person name="Down T."/>
            <person name="Engstrom P."/>
            <person name="Fagiolini M."/>
            <person name="Faulkner G."/>
            <person name="Fletcher C.F."/>
            <person name="Fukushima T."/>
            <person name="Furuno M."/>
            <person name="Futaki S."/>
            <person name="Gariboldi M."/>
            <person name="Georgii-Hemming P."/>
            <person name="Gingeras T.R."/>
            <person name="Gojobori T."/>
            <person name="Green R.E."/>
            <person name="Gustincich S."/>
            <person name="Harbers M."/>
            <person name="Hayashi Y."/>
            <person name="Hensch T.K."/>
            <person name="Hirokawa N."/>
            <person name="Hill D."/>
            <person name="Huminiecki L."/>
            <person name="Iacono M."/>
            <person name="Ikeo K."/>
            <person name="Iwama A."/>
            <person name="Ishikawa T."/>
            <person name="Jakt M."/>
            <person name="Kanapin A."/>
            <person name="Katoh M."/>
            <person name="Kawasawa Y."/>
            <person name="Kelso J."/>
            <person name="Kitamura H."/>
            <person name="Kitano H."/>
            <person name="Kollias G."/>
            <person name="Krishnan S.P."/>
            <person name="Kruger A."/>
            <person name="Kummerfeld S.K."/>
            <person name="Kurochkin I.V."/>
            <person name="Lareau L.F."/>
            <person name="Lazarevic D."/>
            <person name="Lipovich L."/>
            <person name="Liu J."/>
            <person name="Liuni S."/>
            <person name="McWilliam S."/>
            <person name="Madan Babu M."/>
            <person name="Madera M."/>
            <person name="Marchionni L."/>
            <person name="Matsuda H."/>
            <person name="Matsuzawa S."/>
            <person name="Miki H."/>
            <person name="Mignone F."/>
            <person name="Miyake S."/>
            <person name="Morris K."/>
            <person name="Mottagui-Tabar S."/>
            <person name="Mulder N."/>
            <person name="Nakano N."/>
            <person name="Nakauchi H."/>
            <person name="Ng P."/>
            <person name="Nilsson R."/>
            <person name="Nishiguchi S."/>
            <person name="Nishikawa S."/>
            <person name="Nori F."/>
            <person name="Ohara O."/>
            <person name="Okazaki Y."/>
            <person name="Orlando V."/>
            <person name="Pang K.C."/>
            <person name="Pavan W.J."/>
            <person name="Pavesi G."/>
            <person name="Pesole G."/>
            <person name="Petrovsky N."/>
            <person name="Piazza S."/>
            <person name="Reed J."/>
            <person name="Reid J.F."/>
            <person name="Ring B.Z."/>
            <person name="Ringwald M."/>
            <person name="Rost B."/>
            <person name="Ruan Y."/>
            <person name="Salzberg S.L."/>
            <person name="Sandelin A."/>
            <person name="Schneider C."/>
            <person name="Schoenbach C."/>
            <person name="Sekiguchi K."/>
            <person name="Semple C.A."/>
            <person name="Seno S."/>
            <person name="Sessa L."/>
            <person name="Sheng Y."/>
            <person name="Shibata Y."/>
            <person name="Shimada H."/>
            <person name="Shimada K."/>
            <person name="Silva D."/>
            <person name="Sinclair B."/>
            <person name="Sperling S."/>
            <person name="Stupka E."/>
            <person name="Sugiura K."/>
            <person name="Sultana R."/>
            <person name="Takenaka Y."/>
            <person name="Taki K."/>
            <person name="Tammoja K."/>
            <person name="Tan S.L."/>
            <person name="Tang S."/>
            <person name="Taylor M.S."/>
            <person name="Tegner J."/>
            <person name="Teichmann S.A."/>
            <person name="Ueda H.R."/>
            <person name="van Nimwegen E."/>
            <person name="Verardo R."/>
            <person name="Wei C.L."/>
            <person name="Yagi K."/>
            <person name="Yamanishi H."/>
            <person name="Zabarovsky E."/>
            <person name="Zhu S."/>
            <person name="Zimmer A."/>
            <person name="Hide W."/>
            <person name="Bult C."/>
            <person name="Grimmond S.M."/>
            <person name="Teasdale R.D."/>
            <person name="Liu E.T."/>
            <person name="Brusic V."/>
            <person name="Quackenbush J."/>
            <person name="Wahlestedt C."/>
            <person name="Mattick J.S."/>
            <person name="Hume D.A."/>
            <person name="Kai C."/>
            <person name="Sasaki D."/>
            <person name="Tomaru Y."/>
            <person name="Fukuda S."/>
            <person name="Kanamori-Katayama M."/>
            <person name="Suzuki M."/>
            <person name="Aoki J."/>
            <person name="Arakawa T."/>
            <person name="Iida J."/>
            <person name="Imamura K."/>
            <person name="Itoh M."/>
            <person name="Kato T."/>
            <person name="Kawaji H."/>
            <person name="Kawagashira N."/>
            <person name="Kawashima T."/>
            <person name="Kojima M."/>
            <person name="Kondo S."/>
            <person name="Konno H."/>
            <person name="Nakano K."/>
            <person name="Ninomiya N."/>
            <person name="Nishio T."/>
            <person name="Okada M."/>
            <person name="Plessy C."/>
            <person name="Shibata K."/>
            <person name="Shiraki T."/>
            <person name="Suzuki S."/>
            <person name="Tagami M."/>
            <person name="Waki K."/>
            <person name="Watahiki A."/>
            <person name="Okamura-Oho Y."/>
            <person name="Suzuki H."/>
            <person name="Kawai J."/>
            <person name="Hayashizaki Y."/>
        </authorList>
    </citation>
    <scope>NUCLEOTIDE SEQUENCE [LARGE SCALE MRNA] (ISOFORM ARPP-19)</scope>
    <source>
        <strain>C57BL/6J</strain>
        <tissue>Spinal cord</tissue>
    </source>
</reference>
<reference key="3">
    <citation type="journal article" date="2004" name="Genome Res.">
        <title>The status, quality, and expansion of the NIH full-length cDNA project: the Mammalian Gene Collection (MGC).</title>
        <authorList>
            <consortium name="The MGC Project Team"/>
        </authorList>
    </citation>
    <scope>NUCLEOTIDE SEQUENCE [LARGE SCALE MRNA] (ISOFORM ARPP-19)</scope>
    <source>
        <strain>C57BL/6J</strain>
        <tissue>Mammary gland</tissue>
    </source>
</reference>
<reference key="4">
    <citation type="journal article" date="1988" name="Proc. Natl. Acad. Sci. U.S.A.">
        <title>Regulation by cAMP and vasoactive intestinal peptide of phosphorylation of specific proteins in striatal cells in culture.</title>
        <authorList>
            <person name="Girault J.-A."/>
            <person name="Shalaby I.A."/>
            <person name="Rosen N.L."/>
            <person name="Greengard P."/>
        </authorList>
    </citation>
    <scope>PHOSPHORYLATION</scope>
</reference>
<reference key="5">
    <citation type="journal article" date="2001" name="J. Neurochem.">
        <title>ARPP-16/ARPP-19: a highly conserved family of cAMP-regulated phosphoproteins.</title>
        <authorList>
            <person name="Dulubova I."/>
            <person name="Horiuchi A."/>
            <person name="Snyder G.L."/>
            <person name="Girault J.-A."/>
            <person name="Czernik A.J."/>
            <person name="Shao L."/>
            <person name="Ramabhadran R."/>
            <person name="Greengard P."/>
            <person name="Nairn A.C."/>
        </authorList>
    </citation>
    <scope>PHOSPHORYLATION AT SER-104</scope>
</reference>
<reference key="6">
    <citation type="journal article" date="2010" name="Cell">
        <title>A tissue-specific atlas of mouse protein phosphorylation and expression.</title>
        <authorList>
            <person name="Huttlin E.L."/>
            <person name="Jedrychowski M.P."/>
            <person name="Elias J.E."/>
            <person name="Goswami T."/>
            <person name="Rad R."/>
            <person name="Beausoleil S.A."/>
            <person name="Villen J."/>
            <person name="Haas W."/>
            <person name="Sowa M.E."/>
            <person name="Gygi S.P."/>
        </authorList>
    </citation>
    <scope>PHOSPHORYLATION [LARGE SCALE ANALYSIS] AT SER-104</scope>
    <scope>IDENTIFICATION BY MASS SPECTROMETRY [LARGE SCALE ANALYSIS]</scope>
    <source>
        <tissue>Brain</tissue>
        <tissue>Heart</tissue>
        <tissue>Kidney</tissue>
        <tissue>Lung</tissue>
        <tissue>Spleen</tissue>
    </source>
</reference>
<sequence length="112" mass="12293">MSAEVPEAASAEEQKEMEDKVTSPEKAEEAKLKARYPHLGQKPGGSDFLRKRLQKGQKYFDSGDYNMAKAKMKNKQLPAAAPDKTEVTGDHIPTPQDLPQRKPSLVASKLAG</sequence>
<feature type="initiator methionine" description="Removed" evidence="3">
    <location>
        <position position="1"/>
    </location>
</feature>
<feature type="chain" id="PRO_0000146762" description="cAMP-regulated phosphoprotein 19">
    <location>
        <begin position="2"/>
        <end position="112"/>
    </location>
</feature>
<feature type="region of interest" description="Disordered" evidence="5">
    <location>
        <begin position="1"/>
        <end position="49"/>
    </location>
</feature>
<feature type="region of interest" description="Disordered" evidence="5">
    <location>
        <begin position="74"/>
        <end position="112"/>
    </location>
</feature>
<feature type="compositionally biased region" description="Low complexity" evidence="5">
    <location>
        <begin position="1"/>
        <end position="11"/>
    </location>
</feature>
<feature type="compositionally biased region" description="Basic and acidic residues" evidence="5">
    <location>
        <begin position="12"/>
        <end position="32"/>
    </location>
</feature>
<feature type="modified residue" description="N-acetylserine" evidence="3">
    <location>
        <position position="2"/>
    </location>
</feature>
<feature type="modified residue" description="Phosphoserine" evidence="2">
    <location>
        <position position="2"/>
    </location>
</feature>
<feature type="modified residue" description="Phosphoserine" evidence="2">
    <location>
        <position position="23"/>
    </location>
</feature>
<feature type="modified residue" description="Phosphoserine; by GWL" evidence="2">
    <location>
        <position position="62"/>
    </location>
</feature>
<feature type="modified residue" description="Phosphoserine; by GWL" evidence="2">
    <location>
        <position position="104"/>
    </location>
</feature>
<feature type="modified residue" description="Phosphoserine; by PKA" evidence="6 11">
    <location>
        <position position="104"/>
    </location>
</feature>
<feature type="modified residue" description="N6-acetyllysine" evidence="2">
    <location>
        <position position="109"/>
    </location>
</feature>
<feature type="splice variant" id="VSP_018556" description="In isoform ARPP-16." evidence="9">
    <location>
        <begin position="1"/>
        <end position="16"/>
    </location>
</feature>
<feature type="modified residue" description="N-acetylmethionine" evidence="3">
    <location sequence="P56212-2">
        <position position="1"/>
    </location>
</feature>
<proteinExistence type="evidence at protein level"/>
<protein>
    <recommendedName>
        <fullName evidence="2">cAMP-regulated phosphoprotein 19</fullName>
        <shortName>ARPP-19</shortName>
    </recommendedName>
</protein>
<keyword id="KW-0007">Acetylation</keyword>
<keyword id="KW-0025">Alternative splicing</keyword>
<keyword id="KW-0131">Cell cycle</keyword>
<keyword id="KW-0132">Cell division</keyword>
<keyword id="KW-0963">Cytoplasm</keyword>
<keyword id="KW-0498">Mitosis</keyword>
<keyword id="KW-0597">Phosphoprotein</keyword>
<keyword id="KW-0650">Protein phosphatase inhibitor</keyword>
<keyword id="KW-1185">Reference proteome</keyword>
<dbReference type="EMBL" id="AJ005983">
    <property type="protein sequence ID" value="CAA06797.1"/>
    <property type="molecule type" value="mRNA"/>
</dbReference>
<dbReference type="EMBL" id="AK049760">
    <property type="protein sequence ID" value="BAC33908.1"/>
    <property type="molecule type" value="mRNA"/>
</dbReference>
<dbReference type="EMBL" id="BC040206">
    <property type="protein sequence ID" value="AAH40206.1"/>
    <property type="molecule type" value="mRNA"/>
</dbReference>
<dbReference type="CCDS" id="CCDS23340.1">
    <molecule id="P56212-1"/>
</dbReference>
<dbReference type="CCDS" id="CCDS90623.1">
    <molecule id="P56212-2"/>
</dbReference>
<dbReference type="RefSeq" id="NP_001344807.1">
    <molecule id="P56212-1"/>
    <property type="nucleotide sequence ID" value="NM_001357878.1"/>
</dbReference>
<dbReference type="RefSeq" id="NP_001344808.1">
    <molecule id="P56212-1"/>
    <property type="nucleotide sequence ID" value="NM_001357879.1"/>
</dbReference>
<dbReference type="RefSeq" id="NP_001344809.1">
    <molecule id="P56212-2"/>
    <property type="nucleotide sequence ID" value="NM_001357880.1"/>
</dbReference>
<dbReference type="RefSeq" id="NP_001344810.1">
    <molecule id="P56212-2"/>
    <property type="nucleotide sequence ID" value="NM_001357881.1"/>
</dbReference>
<dbReference type="RefSeq" id="NP_067523.1">
    <molecule id="P56212-1"/>
    <property type="nucleotide sequence ID" value="NM_021548.4"/>
</dbReference>
<dbReference type="RefSeq" id="XP_006511390.1">
    <property type="nucleotide sequence ID" value="XM_006511327.1"/>
</dbReference>
<dbReference type="BMRB" id="P56212"/>
<dbReference type="SMR" id="P56212"/>
<dbReference type="FunCoup" id="P56212">
    <property type="interactions" value="2195"/>
</dbReference>
<dbReference type="STRING" id="10090.ENSMUSP00000128921"/>
<dbReference type="iPTMnet" id="P56212"/>
<dbReference type="PhosphoSitePlus" id="P56212"/>
<dbReference type="jPOST" id="P56212"/>
<dbReference type="PaxDb" id="10090-ENSMUSP00000007800"/>
<dbReference type="PeptideAtlas" id="P56212"/>
<dbReference type="ProteomicsDB" id="283231">
    <molecule id="P56212-1"/>
</dbReference>
<dbReference type="ProteomicsDB" id="283232">
    <molecule id="P56212-2"/>
</dbReference>
<dbReference type="Pumba" id="P56212"/>
<dbReference type="Antibodypedia" id="42667">
    <property type="antibodies" value="51 antibodies from 18 providers"/>
</dbReference>
<dbReference type="Ensembl" id="ENSMUST00000007800.8">
    <molecule id="P56212-1"/>
    <property type="protein sequence ID" value="ENSMUSP00000007800.8"/>
    <property type="gene ID" value="ENSMUSG00000007656.15"/>
</dbReference>
<dbReference type="Ensembl" id="ENSMUST00000164467.8">
    <molecule id="P56212-1"/>
    <property type="protein sequence ID" value="ENSMUSP00000130730.2"/>
    <property type="gene ID" value="ENSMUSG00000007656.15"/>
</dbReference>
<dbReference type="Ensembl" id="ENSMUST00000166549.2">
    <molecule id="P56212-2"/>
    <property type="protein sequence ID" value="ENSMUSP00000131987.2"/>
    <property type="gene ID" value="ENSMUSG00000007656.15"/>
</dbReference>
<dbReference type="Ensembl" id="ENSMUST00000167885.8">
    <molecule id="P56212-2"/>
    <property type="protein sequence ID" value="ENSMUSP00000131597.2"/>
    <property type="gene ID" value="ENSMUSG00000007656.15"/>
</dbReference>
<dbReference type="Ensembl" id="ENSMUST00000168166.8">
    <molecule id="P56212-1"/>
    <property type="protein sequence ID" value="ENSMUSP00000126618.2"/>
    <property type="gene ID" value="ENSMUSG00000007656.15"/>
</dbReference>
<dbReference type="Ensembl" id="ENSMUST00000170308.8">
    <molecule id="P56212-1"/>
    <property type="protein sequence ID" value="ENSMUSP00000132350.2"/>
    <property type="gene ID" value="ENSMUSG00000007656.15"/>
</dbReference>
<dbReference type="Ensembl" id="ENSMUST00000170310.2">
    <molecule id="P56212-2"/>
    <property type="protein sequence ID" value="ENSMUSP00000125825.2"/>
    <property type="gene ID" value="ENSMUSG00000007656.15"/>
</dbReference>
<dbReference type="GeneID" id="59046"/>
<dbReference type="KEGG" id="mmu:59046"/>
<dbReference type="UCSC" id="uc009qro.1">
    <molecule id="P56212-1"/>
    <property type="organism name" value="mouse"/>
</dbReference>
<dbReference type="AGR" id="MGI:1891691"/>
<dbReference type="CTD" id="10776"/>
<dbReference type="MGI" id="MGI:1891691">
    <property type="gene designation" value="Arpp19"/>
</dbReference>
<dbReference type="VEuPathDB" id="HostDB:ENSMUSG00000007656"/>
<dbReference type="eggNOG" id="KOG4076">
    <property type="taxonomic scope" value="Eukaryota"/>
</dbReference>
<dbReference type="GeneTree" id="ENSGT00940000154555"/>
<dbReference type="HOGENOM" id="CLU_125025_1_0_1"/>
<dbReference type="InParanoid" id="P56212"/>
<dbReference type="OrthoDB" id="5949865at2759"/>
<dbReference type="TreeFam" id="TF314718"/>
<dbReference type="Reactome" id="R-MMU-2465910">
    <property type="pathway name" value="MASTL Facilitates Mitotic Progression"/>
</dbReference>
<dbReference type="BioGRID-ORCS" id="59046">
    <property type="hits" value="7 hits in 76 CRISPR screens"/>
</dbReference>
<dbReference type="ChiTaRS" id="Arpp19">
    <property type="organism name" value="mouse"/>
</dbReference>
<dbReference type="PRO" id="PR:P56212"/>
<dbReference type="Proteomes" id="UP000000589">
    <property type="component" value="Chromosome 9"/>
</dbReference>
<dbReference type="RNAct" id="P56212">
    <property type="molecule type" value="protein"/>
</dbReference>
<dbReference type="Bgee" id="ENSMUSG00000007656">
    <property type="expression patterns" value="Expressed in caudate-putamen and 264 other cell types or tissues"/>
</dbReference>
<dbReference type="ExpressionAtlas" id="P56212">
    <property type="expression patterns" value="baseline and differential"/>
</dbReference>
<dbReference type="GO" id="GO:0005737">
    <property type="term" value="C:cytoplasm"/>
    <property type="evidence" value="ECO:0007669"/>
    <property type="project" value="UniProtKB-SubCell"/>
</dbReference>
<dbReference type="GO" id="GO:0019212">
    <property type="term" value="F:phosphatase inhibitor activity"/>
    <property type="evidence" value="ECO:0000250"/>
    <property type="project" value="UniProtKB"/>
</dbReference>
<dbReference type="GO" id="GO:0015459">
    <property type="term" value="F:potassium channel regulator activity"/>
    <property type="evidence" value="ECO:0007669"/>
    <property type="project" value="Ensembl"/>
</dbReference>
<dbReference type="GO" id="GO:0051721">
    <property type="term" value="F:protein phosphatase 2A binding"/>
    <property type="evidence" value="ECO:0000250"/>
    <property type="project" value="UniProtKB"/>
</dbReference>
<dbReference type="GO" id="GO:0004864">
    <property type="term" value="F:protein phosphatase inhibitor activity"/>
    <property type="evidence" value="ECO:0007669"/>
    <property type="project" value="UniProtKB-KW"/>
</dbReference>
<dbReference type="GO" id="GO:0019888">
    <property type="term" value="F:protein phosphatase regulator activity"/>
    <property type="evidence" value="ECO:0000250"/>
    <property type="project" value="UniProtKB"/>
</dbReference>
<dbReference type="GO" id="GO:0005102">
    <property type="term" value="F:signaling receptor binding"/>
    <property type="evidence" value="ECO:0007669"/>
    <property type="project" value="Ensembl"/>
</dbReference>
<dbReference type="GO" id="GO:0051301">
    <property type="term" value="P:cell division"/>
    <property type="evidence" value="ECO:0007669"/>
    <property type="project" value="UniProtKB-KW"/>
</dbReference>
<dbReference type="GO" id="GO:0000086">
    <property type="term" value="P:G2/M transition of mitotic cell cycle"/>
    <property type="evidence" value="ECO:0000250"/>
    <property type="project" value="UniProtKB"/>
</dbReference>
<dbReference type="GO" id="GO:0000278">
    <property type="term" value="P:mitotic cell cycle"/>
    <property type="evidence" value="ECO:0000250"/>
    <property type="project" value="UniProtKB"/>
</dbReference>
<dbReference type="GO" id="GO:0045722">
    <property type="term" value="P:positive regulation of gluconeogenesis"/>
    <property type="evidence" value="ECO:0007669"/>
    <property type="project" value="Ensembl"/>
</dbReference>
<dbReference type="InterPro" id="IPR006760">
    <property type="entry name" value="Endosulphine"/>
</dbReference>
<dbReference type="PANTHER" id="PTHR10358:SF4">
    <property type="entry name" value="CAMP-REGULATED PHOSPHOPROTEIN 19"/>
    <property type="match status" value="1"/>
</dbReference>
<dbReference type="PANTHER" id="PTHR10358">
    <property type="entry name" value="ENDOSULFINE"/>
    <property type="match status" value="1"/>
</dbReference>
<dbReference type="Pfam" id="PF04667">
    <property type="entry name" value="Endosulfine"/>
    <property type="match status" value="1"/>
</dbReference>
<evidence type="ECO:0000250" key="1"/>
<evidence type="ECO:0000250" key="2">
    <source>
        <dbReference type="UniProtKB" id="P56211"/>
    </source>
</evidence>
<evidence type="ECO:0000250" key="3">
    <source>
        <dbReference type="UniProtKB" id="Q28055"/>
    </source>
</evidence>
<evidence type="ECO:0000250" key="4">
    <source>
        <dbReference type="UniProtKB" id="Q712U5"/>
    </source>
</evidence>
<evidence type="ECO:0000256" key="5">
    <source>
        <dbReference type="SAM" id="MobiDB-lite"/>
    </source>
</evidence>
<evidence type="ECO:0000269" key="6">
    <source>
    </source>
</evidence>
<evidence type="ECO:0000269" key="7">
    <source>
    </source>
</evidence>
<evidence type="ECO:0000269" key="8">
    <source ref="1"/>
</evidence>
<evidence type="ECO:0000303" key="9">
    <source ref="1"/>
</evidence>
<evidence type="ECO:0000305" key="10"/>
<evidence type="ECO:0007744" key="11">
    <source>
    </source>
</evidence>
<organism>
    <name type="scientific">Mus musculus</name>
    <name type="common">Mouse</name>
    <dbReference type="NCBI Taxonomy" id="10090"/>
    <lineage>
        <taxon>Eukaryota</taxon>
        <taxon>Metazoa</taxon>
        <taxon>Chordata</taxon>
        <taxon>Craniata</taxon>
        <taxon>Vertebrata</taxon>
        <taxon>Euteleostomi</taxon>
        <taxon>Mammalia</taxon>
        <taxon>Eutheria</taxon>
        <taxon>Euarchontoglires</taxon>
        <taxon>Glires</taxon>
        <taxon>Rodentia</taxon>
        <taxon>Myomorpha</taxon>
        <taxon>Muroidea</taxon>
        <taxon>Muridae</taxon>
        <taxon>Murinae</taxon>
        <taxon>Mus</taxon>
        <taxon>Mus</taxon>
    </lineage>
</organism>